<comment type="function">
    <text evidence="2 3">Catalyzes the non-heme iron(II)-dependent oxidative cleavage of 2,3-dihydroxyphenylpropionic acid and 2,3-dihydroxicinnamic acid into 2-hydroxy-6-ketononadienedioate and 2-hydroxy-6-ketononatrienedioate, respectively.</text>
</comment>
<comment type="catalytic activity">
    <reaction evidence="2 3">
        <text>3-(2,3-dihydroxyphenyl)propanoate + O2 = (2Z,4E)-2-hydroxy-6-oxonona-2,4-dienedioate + H(+)</text>
        <dbReference type="Rhea" id="RHEA:23840"/>
        <dbReference type="ChEBI" id="CHEBI:15378"/>
        <dbReference type="ChEBI" id="CHEBI:15379"/>
        <dbReference type="ChEBI" id="CHEBI:46951"/>
        <dbReference type="ChEBI" id="CHEBI:66887"/>
        <dbReference type="EC" id="1.13.11.16"/>
    </reaction>
</comment>
<comment type="catalytic activity">
    <reaction>
        <text>(2E)-3-(2,3-dihydroxyphenyl)prop-2-enoate + O2 = (2Z,4E,7E)-2-hydroxy-6-oxonona-2,4,7-trienedioate + H(+)</text>
        <dbReference type="Rhea" id="RHEA:25054"/>
        <dbReference type="ChEBI" id="CHEBI:15378"/>
        <dbReference type="ChEBI" id="CHEBI:15379"/>
        <dbReference type="ChEBI" id="CHEBI:58642"/>
        <dbReference type="ChEBI" id="CHEBI:66888"/>
        <dbReference type="EC" id="1.13.11.16"/>
    </reaction>
</comment>
<comment type="biophysicochemical properties">
    <kinetics>
        <KM evidence="2 3">26 uM for 2,3-dihydroxyphenylpropionic acid (at 20 degrees Celsius and pH 8)</KM>
        <KM evidence="3">36 uM for 2,3-dihydroxycinnamic acid (at 20 degrees Celsius and pH 8)</KM>
        <KM evidence="3">37 uM for methyl-2,3-dihydroxyphenylpropionate (at 20 degrees Celsius and pH 8)</KM>
        <KM evidence="2 3">90 uM for 3-methylcatechol (at 20 degrees Celsius and pH 8)</KM>
        <KM evidence="3">94 uM for 3-phenethylcatechol (at 20 degrees Celsius and pH 8)</KM>
        <KM evidence="3">154 uM for 3-propylcatechol (at 20 degrees Celsius and pH 8)</KM>
        <KM evidence="3">185 uM for 3-ethylcatechol (at 20 degrees Celsius and pH 8)</KM>
        <KM evidence="3">300 uM for 2,3-dihydroxyphenoxyacetic acid (at 20 degrees Celsius and pH 8)</KM>
        <KM evidence="3">700 uM for catechol (at 20 degrees Celsius and pH 8)</KM>
    </kinetics>
</comment>
<comment type="pathway">
    <text>Aromatic compound metabolism; 3-phenylpropanoate degradation.</text>
</comment>
<comment type="subunit">
    <text evidence="2">Homotetramer.</text>
</comment>
<comment type="similarity">
    <text evidence="4">Belongs to the LigB/MhpB extradiol dioxygenase family.</text>
</comment>
<sequence length="314" mass="34196">MHAYLHCLSHSPLVGYVDPAQEVLDEVNGVIASARERIAAFSPELVVLFAPDHYNGFFYDVMPPFCLGVGATAIGDFGSAAGELPVPVELAEACAHAVMKSGIDLAVSYCMQVDHGFAQPLEFLLGGLDKVPVLPVFINGVATPLPGFQRTRMLGEAIGRFTSTLNKRVLFLGSGGLSHQPPVPELAKADAHMRDRLLGSGKDLPASERELRQQRVISAAEKFVEDQRTLHPLNPIWDNQFMTLLEQGRIQELDAVSNEELSAIAGKSTHEIKTWVAAFAAISAFGNWRSEGRYYRPIPEWIAGFGSLSARTEN</sequence>
<protein>
    <recommendedName>
        <fullName>2,3-dihydroxyphenylpropionate/2,3-dihydroxicinnamic acid 1,2-dioxygenase</fullName>
        <ecNumber evidence="2 3">1.13.11.16</ecNumber>
    </recommendedName>
    <alternativeName>
        <fullName>3-carboxyethylcatechol 2,3-dioxygenase</fullName>
    </alternativeName>
</protein>
<accession>P0ABR9</accession>
<accession>P54711</accession>
<accession>P77048</accession>
<accession>P77461</accession>
<accession>Q2MC76</accession>
<organism>
    <name type="scientific">Escherichia coli (strain K12)</name>
    <dbReference type="NCBI Taxonomy" id="83333"/>
    <lineage>
        <taxon>Bacteria</taxon>
        <taxon>Pseudomonadati</taxon>
        <taxon>Pseudomonadota</taxon>
        <taxon>Gammaproteobacteria</taxon>
        <taxon>Enterobacterales</taxon>
        <taxon>Enterobacteriaceae</taxon>
        <taxon>Escherichia</taxon>
    </lineage>
</organism>
<name>MHPB_ECOLI</name>
<proteinExistence type="evidence at protein level"/>
<gene>
    <name type="primary">mhpB</name>
    <name type="ordered locus">b0348</name>
    <name type="ordered locus">JW0339</name>
</gene>
<evidence type="ECO:0000269" key="1">
    <source>
    </source>
</evidence>
<evidence type="ECO:0000269" key="2">
    <source>
    </source>
</evidence>
<evidence type="ECO:0000269" key="3">
    <source>
    </source>
</evidence>
<evidence type="ECO:0000305" key="4"/>
<evidence type="ECO:0007829" key="5">
    <source>
        <dbReference type="PDB" id="8K04"/>
    </source>
</evidence>
<keyword id="KW-0002">3D-structure</keyword>
<keyword id="KW-0058">Aromatic hydrocarbons catabolism</keyword>
<keyword id="KW-0223">Dioxygenase</keyword>
<keyword id="KW-0903">Direct protein sequencing</keyword>
<keyword id="KW-0408">Iron</keyword>
<keyword id="KW-0560">Oxidoreductase</keyword>
<keyword id="KW-1185">Reference proteome</keyword>
<feature type="chain" id="PRO_0000085103" description="2,3-dihydroxyphenylpropionate/2,3-dihydroxicinnamic acid 1,2-dioxygenase">
    <location>
        <begin position="1"/>
        <end position="314"/>
    </location>
</feature>
<feature type="active site" description="Proton donor">
    <location>
        <position position="115"/>
    </location>
</feature>
<feature type="active site" description="Proton acceptor">
    <location>
        <position position="179"/>
    </location>
</feature>
<feature type="mutagenesis site" description="Complete loss of extradiol cleavage activity." evidence="1">
    <original>D</original>
    <variation>A</variation>
    <location>
        <position position="114"/>
    </location>
</feature>
<feature type="mutagenesis site" description="Low level of catalytic activity, 600-fold lower than the wild-type enzyme. More than 8000-fold decrease in affinity." evidence="1">
    <original>D</original>
    <variation>N</variation>
    <location>
        <position position="114"/>
    </location>
</feature>
<feature type="mutagenesis site" description="Complete loss of extradiol cleavage activity." evidence="1">
    <original>H</original>
    <variation>A</variation>
    <location>
        <position position="115"/>
    </location>
</feature>
<feature type="mutagenesis site" description="Complete loss of activity." evidence="1">
    <original>H</original>
    <variation>Q</variation>
    <location>
        <position position="115"/>
    </location>
</feature>
<feature type="mutagenesis site" description="Complete loss of activity." evidence="1">
    <original>H</original>
    <variation>Y</variation>
    <location>
        <position position="115"/>
    </location>
</feature>
<feature type="mutagenesis site" description="Complete loss of activity." evidence="1">
    <original>H</original>
    <variation>A</variation>
    <location>
        <position position="179"/>
    </location>
</feature>
<feature type="mutagenesis site" description="Complete loss of activity." evidence="1">
    <original>H</original>
    <variation>Q</variation>
    <location>
        <position position="179"/>
    </location>
</feature>
<feature type="mutagenesis site" description="Complete loss of activity." evidence="1">
    <original>H</original>
    <variation>Y</variation>
    <location>
        <position position="179"/>
    </location>
</feature>
<feature type="mutagenesis site" description="More than 2-fold decrease in catalytic activity and 100-fold decrease in affinity." evidence="1">
    <original>P</original>
    <variation>A</variation>
    <location>
        <position position="181"/>
    </location>
</feature>
<feature type="mutagenesis site" description="More than 60-fold decrease in catalytic activity and affinity." evidence="1">
    <original>P</original>
    <variation>H</variation>
    <location>
        <position position="181"/>
    </location>
</feature>
<feature type="sequence conflict" description="In Ref. 1; BAA13053." evidence="4" ref="1">
    <original>ING</original>
    <variation>NKA</variation>
    <location>
        <begin position="138"/>
        <end position="140"/>
    </location>
</feature>
<feature type="sequence conflict" description="In Ref. 1; BAA13053." evidence="4" ref="1">
    <original>R</original>
    <variation>H</variation>
    <location>
        <position position="152"/>
    </location>
</feature>
<feature type="sequence conflict" description="In Ref. 1; BAA13053." evidence="4" ref="1">
    <original>A</original>
    <variation>T</variation>
    <location>
        <position position="157"/>
    </location>
</feature>
<feature type="strand" evidence="5">
    <location>
        <begin position="2"/>
        <end position="8"/>
    </location>
</feature>
<feature type="strand" evidence="5">
    <location>
        <begin position="14"/>
        <end position="17"/>
    </location>
</feature>
<feature type="helix" evidence="5">
    <location>
        <begin position="21"/>
        <end position="41"/>
    </location>
</feature>
<feature type="strand" evidence="5">
    <location>
        <begin position="44"/>
        <end position="50"/>
    </location>
</feature>
<feature type="strand" evidence="5">
    <location>
        <begin position="53"/>
        <end position="56"/>
    </location>
</feature>
<feature type="strand" evidence="5">
    <location>
        <begin position="64"/>
        <end position="74"/>
    </location>
</feature>
<feature type="helix" evidence="5">
    <location>
        <begin position="76"/>
        <end position="78"/>
    </location>
</feature>
<feature type="strand" evidence="5">
    <location>
        <begin position="81"/>
        <end position="83"/>
    </location>
</feature>
<feature type="helix" evidence="5">
    <location>
        <begin position="88"/>
        <end position="101"/>
    </location>
</feature>
<feature type="strand" evidence="5">
    <location>
        <begin position="106"/>
        <end position="113"/>
    </location>
</feature>
<feature type="helix" evidence="5">
    <location>
        <begin position="115"/>
        <end position="125"/>
    </location>
</feature>
<feature type="strand" evidence="5">
    <location>
        <begin position="126"/>
        <end position="131"/>
    </location>
</feature>
<feature type="strand" evidence="5">
    <location>
        <begin position="133"/>
        <end position="138"/>
    </location>
</feature>
<feature type="strand" evidence="5">
    <location>
        <begin position="141"/>
        <end position="144"/>
    </location>
</feature>
<feature type="helix" evidence="5">
    <location>
        <begin position="148"/>
        <end position="162"/>
    </location>
</feature>
<feature type="strand" evidence="5">
    <location>
        <begin position="167"/>
        <end position="173"/>
    </location>
</feature>
<feature type="helix" evidence="5">
    <location>
        <begin position="191"/>
        <end position="198"/>
    </location>
</feature>
<feature type="helix" evidence="5">
    <location>
        <begin position="200"/>
        <end position="203"/>
    </location>
</feature>
<feature type="helix" evidence="5">
    <location>
        <begin position="206"/>
        <end position="225"/>
    </location>
</feature>
<feature type="strand" evidence="5">
    <location>
        <begin position="227"/>
        <end position="230"/>
    </location>
</feature>
<feature type="helix" evidence="5">
    <location>
        <begin position="235"/>
        <end position="246"/>
    </location>
</feature>
<feature type="helix" evidence="5">
    <location>
        <begin position="250"/>
        <end position="255"/>
    </location>
</feature>
<feature type="helix" evidence="5">
    <location>
        <begin position="258"/>
        <end position="265"/>
    </location>
</feature>
<feature type="helix" evidence="5">
    <location>
        <begin position="267"/>
        <end position="272"/>
    </location>
</feature>
<feature type="helix" evidence="5">
    <location>
        <begin position="273"/>
        <end position="282"/>
    </location>
</feature>
<feature type="helix" evidence="5">
    <location>
        <begin position="283"/>
        <end position="285"/>
    </location>
</feature>
<feature type="strand" evidence="5">
    <location>
        <begin position="288"/>
        <end position="297"/>
    </location>
</feature>
<feature type="strand" evidence="5">
    <location>
        <begin position="299"/>
        <end position="312"/>
    </location>
</feature>
<reference key="1">
    <citation type="journal article" date="1996" name="J. Bacteriol.">
        <title>Catechol dioxygenases from Escherichia coli (MhpB) and Alcaligenes eutrophus (MpcI): sequence analysis and biochemical properties of a third family of extradiol dioxygenases.</title>
        <authorList>
            <person name="Spence E.L."/>
            <person name="Kawamukai M."/>
            <person name="Sanvoisin J."/>
            <person name="Braven H."/>
            <person name="Bugg T.D.H."/>
        </authorList>
    </citation>
    <scope>NUCLEOTIDE SEQUENCE [GENOMIC DNA]</scope>
    <scope>BIOPHYSICOCHEMICAL PROPERTIES</scope>
    <scope>CATALYTIC ACTIVITY</scope>
    <scope>FUNCTION</scope>
    <source>
        <strain>K12 / W3110 / ATCC 27325 / DSM 5911</strain>
    </source>
</reference>
<reference key="2">
    <citation type="journal article" date="1997" name="J. Bacteriol.">
        <title>Genetic characterization and expression in heterologous hosts of the 3-(3-hydroxyphenyl)propionate catabolic pathway of Escherichia coli K-12.</title>
        <authorList>
            <person name="Ferrandez A."/>
            <person name="Garcia J.L."/>
            <person name="Diaz E."/>
        </authorList>
    </citation>
    <scope>NUCLEOTIDE SEQUENCE [GENOMIC DNA]</scope>
    <source>
        <strain>K12 / CS520</strain>
    </source>
</reference>
<reference key="3">
    <citation type="submission" date="1997-01" db="EMBL/GenBank/DDBJ databases">
        <title>Sequence of minutes 4-25 of Escherichia coli.</title>
        <authorList>
            <person name="Chung E."/>
            <person name="Allen E."/>
            <person name="Araujo R."/>
            <person name="Aparicio A.M."/>
            <person name="Davis K."/>
            <person name="Duncan M."/>
            <person name="Federspiel N."/>
            <person name="Hyman R."/>
            <person name="Kalman S."/>
            <person name="Komp C."/>
            <person name="Kurdi O."/>
            <person name="Lew H."/>
            <person name="Lin D."/>
            <person name="Namath A."/>
            <person name="Oefner P."/>
            <person name="Roberts D."/>
            <person name="Schramm S."/>
            <person name="Davis R.W."/>
        </authorList>
    </citation>
    <scope>NUCLEOTIDE SEQUENCE [LARGE SCALE GENOMIC DNA]</scope>
    <source>
        <strain>K12 / MG1655 / ATCC 47076</strain>
    </source>
</reference>
<reference key="4">
    <citation type="journal article" date="1997" name="Science">
        <title>The complete genome sequence of Escherichia coli K-12.</title>
        <authorList>
            <person name="Blattner F.R."/>
            <person name="Plunkett G. III"/>
            <person name="Bloch C.A."/>
            <person name="Perna N.T."/>
            <person name="Burland V."/>
            <person name="Riley M."/>
            <person name="Collado-Vides J."/>
            <person name="Glasner J.D."/>
            <person name="Rode C.K."/>
            <person name="Mayhew G.F."/>
            <person name="Gregor J."/>
            <person name="Davis N.W."/>
            <person name="Kirkpatrick H.A."/>
            <person name="Goeden M.A."/>
            <person name="Rose D.J."/>
            <person name="Mau B."/>
            <person name="Shao Y."/>
        </authorList>
    </citation>
    <scope>NUCLEOTIDE SEQUENCE [LARGE SCALE GENOMIC DNA]</scope>
    <source>
        <strain>K12 / MG1655 / ATCC 47076</strain>
    </source>
</reference>
<reference key="5">
    <citation type="journal article" date="2006" name="Mol. Syst. Biol.">
        <title>Highly accurate genome sequences of Escherichia coli K-12 strains MG1655 and W3110.</title>
        <authorList>
            <person name="Hayashi K."/>
            <person name="Morooka N."/>
            <person name="Yamamoto Y."/>
            <person name="Fujita K."/>
            <person name="Isono K."/>
            <person name="Choi S."/>
            <person name="Ohtsubo E."/>
            <person name="Baba T."/>
            <person name="Wanner B.L."/>
            <person name="Mori H."/>
            <person name="Horiuchi T."/>
        </authorList>
    </citation>
    <scope>NUCLEOTIDE SEQUENCE [LARGE SCALE GENOMIC DNA]</scope>
    <source>
        <strain>K12 / W3110 / ATCC 27325 / DSM 5911</strain>
    </source>
</reference>
<reference key="6">
    <citation type="journal article" date="1993" name="Biochim. Biophys. Acta">
        <title>Overproduction, purification and properties of 2,3-dihydroxyphenylpropionate 1,2-dioxygenase from Escherichia coli.</title>
        <authorList>
            <person name="Bugg T.D.H."/>
        </authorList>
    </citation>
    <scope>PROTEIN SEQUENCE OF 1-15</scope>
    <scope>SUBUNIT</scope>
    <scope>FUNCTION</scope>
    <scope>BIOPHYSICOCHEMICAL PROPERTIES</scope>
    <scope>CATALYTIC ACTIVITY</scope>
</reference>
<reference key="7">
    <citation type="journal article" date="2004" name="Biochemistry">
        <title>Acid-base catalysis in the extradiol catechol dioxygenase reaction mechanism: site-directed mutagenesis of His-115 and His-179 in Escherichia coli 2,3-dihydroxyphenylpropionate 1,2-dioxygenase (MhpB).</title>
        <authorList>
            <person name="Mendel S."/>
            <person name="Arndt A."/>
            <person name="Bugg T.D.H."/>
        </authorList>
    </citation>
    <scope>MUTAGENESIS OF ASP-114; HIS-115; HIS-179 AND PRO-181</scope>
    <scope>REACTION MECHANISM</scope>
</reference>
<dbReference type="EC" id="1.13.11.16" evidence="2 3"/>
<dbReference type="EMBL" id="D86239">
    <property type="protein sequence ID" value="BAA13053.1"/>
    <property type="molecule type" value="Genomic_DNA"/>
</dbReference>
<dbReference type="EMBL" id="Y09555">
    <property type="protein sequence ID" value="CAA70748.1"/>
    <property type="molecule type" value="Genomic_DNA"/>
</dbReference>
<dbReference type="EMBL" id="U73857">
    <property type="protein sequence ID" value="AAB18072.1"/>
    <property type="molecule type" value="Genomic_DNA"/>
</dbReference>
<dbReference type="EMBL" id="U00096">
    <property type="protein sequence ID" value="AAC73451.1"/>
    <property type="molecule type" value="Genomic_DNA"/>
</dbReference>
<dbReference type="EMBL" id="AP009048">
    <property type="protein sequence ID" value="BAE76130.1"/>
    <property type="molecule type" value="Genomic_DNA"/>
</dbReference>
<dbReference type="PIR" id="D64762">
    <property type="entry name" value="D64762"/>
</dbReference>
<dbReference type="RefSeq" id="NP_414882.1">
    <property type="nucleotide sequence ID" value="NC_000913.3"/>
</dbReference>
<dbReference type="RefSeq" id="WP_000543457.1">
    <property type="nucleotide sequence ID" value="NZ_SSZK01000061.1"/>
</dbReference>
<dbReference type="PDB" id="8K04">
    <property type="method" value="EM"/>
    <property type="resolution" value="2.72 A"/>
    <property type="chains" value="A/B/C/D/E/F/G/H/I/J=1-314"/>
</dbReference>
<dbReference type="PDB" id="9KTI">
    <property type="method" value="EM"/>
    <property type="resolution" value="2.59 A"/>
    <property type="chains" value="A/B/C/D/E/F/G/H/I/J=1-314"/>
</dbReference>
<dbReference type="PDBsum" id="8K04"/>
<dbReference type="PDBsum" id="9KTI"/>
<dbReference type="EMDB" id="EMD-62561"/>
<dbReference type="SMR" id="P0ABR9"/>
<dbReference type="BioGRID" id="4260730">
    <property type="interactions" value="17"/>
</dbReference>
<dbReference type="BioGRID" id="849436">
    <property type="interactions" value="6"/>
</dbReference>
<dbReference type="DIP" id="DIP-10206N"/>
<dbReference type="FunCoup" id="P0ABR9">
    <property type="interactions" value="69"/>
</dbReference>
<dbReference type="IntAct" id="P0ABR9">
    <property type="interactions" value="12"/>
</dbReference>
<dbReference type="STRING" id="511145.b0348"/>
<dbReference type="SwissLipids" id="SLP:000001889"/>
<dbReference type="PaxDb" id="511145-b0348"/>
<dbReference type="EnsemblBacteria" id="AAC73451">
    <property type="protein sequence ID" value="AAC73451"/>
    <property type="gene ID" value="b0348"/>
</dbReference>
<dbReference type="GeneID" id="93777107"/>
<dbReference type="GeneID" id="945047"/>
<dbReference type="KEGG" id="ecj:JW0339"/>
<dbReference type="KEGG" id="eco:b0348"/>
<dbReference type="KEGG" id="ecoc:C3026_01715"/>
<dbReference type="KEGG" id="ecoc:C3026_24875"/>
<dbReference type="PATRIC" id="fig|1411691.4.peg.1930"/>
<dbReference type="EchoBASE" id="EB4167"/>
<dbReference type="eggNOG" id="COG3384">
    <property type="taxonomic scope" value="Bacteria"/>
</dbReference>
<dbReference type="HOGENOM" id="CLU_078149_0_0_6"/>
<dbReference type="InParanoid" id="P0ABR9"/>
<dbReference type="OMA" id="MDVDHGT"/>
<dbReference type="OrthoDB" id="8673673at2"/>
<dbReference type="PhylomeDB" id="P0ABR9"/>
<dbReference type="BioCyc" id="EcoCyc:DHPDIOXYGEN-MONOMER"/>
<dbReference type="BioCyc" id="MetaCyc:DHPDIOXYGEN-MONOMER"/>
<dbReference type="BRENDA" id="1.13.11.16">
    <property type="organism ID" value="2026"/>
</dbReference>
<dbReference type="SABIO-RK" id="P0ABR9"/>
<dbReference type="UniPathway" id="UPA00714"/>
<dbReference type="PRO" id="PR:P0ABR9"/>
<dbReference type="Proteomes" id="UP000000625">
    <property type="component" value="Chromosome"/>
</dbReference>
<dbReference type="GO" id="GO:0047070">
    <property type="term" value="F:3-carboxyethylcatechol 2,3-dioxygenase activity"/>
    <property type="evidence" value="ECO:0000314"/>
    <property type="project" value="EcoCyc"/>
</dbReference>
<dbReference type="GO" id="GO:0008198">
    <property type="term" value="F:ferrous iron binding"/>
    <property type="evidence" value="ECO:0000314"/>
    <property type="project" value="EcoCyc"/>
</dbReference>
<dbReference type="GO" id="GO:0019622">
    <property type="term" value="P:3-(3-hydroxy)phenylpropionate catabolic process"/>
    <property type="evidence" value="ECO:0000315"/>
    <property type="project" value="EcoCyc"/>
</dbReference>
<dbReference type="GO" id="GO:0019380">
    <property type="term" value="P:3-phenylpropionate catabolic process"/>
    <property type="evidence" value="ECO:0007669"/>
    <property type="project" value="UniProtKB-UniRule"/>
</dbReference>
<dbReference type="GO" id="GO:0046271">
    <property type="term" value="P:phenylpropanoid catabolic process"/>
    <property type="evidence" value="ECO:0000315"/>
    <property type="project" value="EcoCyc"/>
</dbReference>
<dbReference type="CDD" id="cd07365">
    <property type="entry name" value="MhpB_like"/>
    <property type="match status" value="1"/>
</dbReference>
<dbReference type="Gene3D" id="3.40.830.10">
    <property type="entry name" value="LigB-like"/>
    <property type="match status" value="1"/>
</dbReference>
<dbReference type="HAMAP" id="MF_01653">
    <property type="entry name" value="MhpB"/>
    <property type="match status" value="1"/>
</dbReference>
<dbReference type="InterPro" id="IPR023789">
    <property type="entry name" value="DHPP/DHXA_dioxygenase"/>
</dbReference>
<dbReference type="InterPro" id="IPR004183">
    <property type="entry name" value="Xdiol_dOase_suB"/>
</dbReference>
<dbReference type="NCBIfam" id="NF009907">
    <property type="entry name" value="PRK13370.1-1"/>
    <property type="match status" value="1"/>
</dbReference>
<dbReference type="NCBIfam" id="NF009910">
    <property type="entry name" value="PRK13370.1-4"/>
    <property type="match status" value="1"/>
</dbReference>
<dbReference type="Pfam" id="PF02900">
    <property type="entry name" value="LigB"/>
    <property type="match status" value="1"/>
</dbReference>
<dbReference type="SUPFAM" id="SSF53213">
    <property type="entry name" value="LigB-like"/>
    <property type="match status" value="1"/>
</dbReference>